<evidence type="ECO:0000250" key="1">
    <source>
        <dbReference type="UniProtKB" id="Q16850"/>
    </source>
</evidence>
<evidence type="ECO:0000250" key="2">
    <source>
        <dbReference type="UniProtKB" id="Q64654"/>
    </source>
</evidence>
<evidence type="ECO:0000250" key="3">
    <source>
        <dbReference type="UniProtKB" id="Q9NYL5"/>
    </source>
</evidence>
<evidence type="ECO:0000255" key="4"/>
<evidence type="ECO:0000269" key="5">
    <source>
    </source>
</evidence>
<evidence type="ECO:0000305" key="6"/>
<accession>Q9JKJ9</accession>
<organism>
    <name type="scientific">Mus musculus</name>
    <name type="common">Mouse</name>
    <dbReference type="NCBI Taxonomy" id="10090"/>
    <lineage>
        <taxon>Eukaryota</taxon>
        <taxon>Metazoa</taxon>
        <taxon>Chordata</taxon>
        <taxon>Craniata</taxon>
        <taxon>Vertebrata</taxon>
        <taxon>Euteleostomi</taxon>
        <taxon>Mammalia</taxon>
        <taxon>Eutheria</taxon>
        <taxon>Euarchontoglires</taxon>
        <taxon>Glires</taxon>
        <taxon>Rodentia</taxon>
        <taxon>Myomorpha</taxon>
        <taxon>Muroidea</taxon>
        <taxon>Muridae</taxon>
        <taxon>Murinae</taxon>
        <taxon>Mus</taxon>
        <taxon>Mus</taxon>
    </lineage>
</organism>
<feature type="chain" id="PRO_0000051993" description="24-hydroxycholesterol 7-alpha-hydroxylase">
    <location>
        <begin position="1"/>
        <end position="470"/>
    </location>
</feature>
<feature type="transmembrane region" description="Helical" evidence="4">
    <location>
        <begin position="3"/>
        <end position="23"/>
    </location>
</feature>
<feature type="transmembrane region" description="Helical" evidence="4">
    <location>
        <begin position="270"/>
        <end position="290"/>
    </location>
</feature>
<feature type="binding site" description="axial binding residue" evidence="1">
    <location>
        <position position="415"/>
    </location>
    <ligand>
        <name>heme</name>
        <dbReference type="ChEBI" id="CHEBI:30413"/>
    </ligand>
    <ligandPart>
        <name>Fe</name>
        <dbReference type="ChEBI" id="CHEBI:18248"/>
    </ligandPart>
</feature>
<gene>
    <name type="primary">Cyp39a1</name>
</gene>
<dbReference type="EC" id="1.14.14.26" evidence="5"/>
<dbReference type="EMBL" id="AF237981">
    <property type="protein sequence ID" value="AAF63328.1"/>
    <property type="molecule type" value="mRNA"/>
</dbReference>
<dbReference type="CCDS" id="CCDS28799.1"/>
<dbReference type="RefSeq" id="NP_061375.1">
    <property type="nucleotide sequence ID" value="NM_018887.5"/>
</dbReference>
<dbReference type="SMR" id="Q9JKJ9"/>
<dbReference type="FunCoup" id="Q9JKJ9">
    <property type="interactions" value="571"/>
</dbReference>
<dbReference type="STRING" id="10090.ENSMUSP00000130073"/>
<dbReference type="SwissLipids" id="SLP:000001228"/>
<dbReference type="iPTMnet" id="Q9JKJ9"/>
<dbReference type="PhosphoSitePlus" id="Q9JKJ9"/>
<dbReference type="SwissPalm" id="Q9JKJ9"/>
<dbReference type="jPOST" id="Q9JKJ9"/>
<dbReference type="PaxDb" id="10090-ENSMUSP00000130073"/>
<dbReference type="ProteomicsDB" id="283619"/>
<dbReference type="Pumba" id="Q9JKJ9"/>
<dbReference type="Antibodypedia" id="30714">
    <property type="antibodies" value="242 antibodies from 28 providers"/>
</dbReference>
<dbReference type="DNASU" id="56050"/>
<dbReference type="Ensembl" id="ENSMUST00000170988.2">
    <property type="protein sequence ID" value="ENSMUSP00000130073.2"/>
    <property type="gene ID" value="ENSMUSG00000023963.11"/>
</dbReference>
<dbReference type="GeneID" id="56050"/>
<dbReference type="KEGG" id="mmu:56050"/>
<dbReference type="UCSC" id="uc008cpn.2">
    <property type="organism name" value="mouse"/>
</dbReference>
<dbReference type="AGR" id="MGI:1927096"/>
<dbReference type="CTD" id="51302"/>
<dbReference type="MGI" id="MGI:1927096">
    <property type="gene designation" value="Cyp39a1"/>
</dbReference>
<dbReference type="VEuPathDB" id="HostDB:ENSMUSG00000023963"/>
<dbReference type="eggNOG" id="KOG0684">
    <property type="taxonomic scope" value="Eukaryota"/>
</dbReference>
<dbReference type="GeneTree" id="ENSGT00940000153141"/>
<dbReference type="HOGENOM" id="CLU_558065_0_0_1"/>
<dbReference type="InParanoid" id="Q9JKJ9"/>
<dbReference type="OMA" id="EYLLRNW"/>
<dbReference type="OrthoDB" id="6692864at2759"/>
<dbReference type="PhylomeDB" id="Q9JKJ9"/>
<dbReference type="TreeFam" id="TF105090"/>
<dbReference type="BRENDA" id="1.14.14.26">
    <property type="organism ID" value="3474"/>
</dbReference>
<dbReference type="Reactome" id="R-MMU-193775">
    <property type="pathway name" value="Synthesis of bile acids and bile salts via 24-hydroxycholesterol"/>
</dbReference>
<dbReference type="Reactome" id="R-MMU-211976">
    <property type="pathway name" value="Endogenous sterols"/>
</dbReference>
<dbReference type="UniPathway" id="UPA00221"/>
<dbReference type="UniPathway" id="UPA01058"/>
<dbReference type="BioGRID-ORCS" id="56050">
    <property type="hits" value="1 hit in 79 CRISPR screens"/>
</dbReference>
<dbReference type="ChiTaRS" id="Cyp39a1">
    <property type="organism name" value="mouse"/>
</dbReference>
<dbReference type="PRO" id="PR:Q9JKJ9"/>
<dbReference type="Proteomes" id="UP000000589">
    <property type="component" value="Chromosome 17"/>
</dbReference>
<dbReference type="RNAct" id="Q9JKJ9">
    <property type="molecule type" value="protein"/>
</dbReference>
<dbReference type="Bgee" id="ENSMUSG00000023963">
    <property type="expression patterns" value="Expressed in sciatic nerve and 198 other cell types or tissues"/>
</dbReference>
<dbReference type="ExpressionAtlas" id="Q9JKJ9">
    <property type="expression patterns" value="baseline and differential"/>
</dbReference>
<dbReference type="GO" id="GO:0005789">
    <property type="term" value="C:endoplasmic reticulum membrane"/>
    <property type="evidence" value="ECO:0007669"/>
    <property type="project" value="UniProtKB-SubCell"/>
</dbReference>
<dbReference type="GO" id="GO:0043231">
    <property type="term" value="C:intracellular membrane-bounded organelle"/>
    <property type="evidence" value="ECO:0000304"/>
    <property type="project" value="UniProtKB"/>
</dbReference>
<dbReference type="GO" id="GO:0033782">
    <property type="term" value="F:24S-hydroxycholesterol 7-alpha-hydroxylase activity"/>
    <property type="evidence" value="ECO:0007669"/>
    <property type="project" value="UniProtKB-EC"/>
</dbReference>
<dbReference type="GO" id="GO:0020037">
    <property type="term" value="F:heme binding"/>
    <property type="evidence" value="ECO:0007669"/>
    <property type="project" value="InterPro"/>
</dbReference>
<dbReference type="GO" id="GO:0005506">
    <property type="term" value="F:iron ion binding"/>
    <property type="evidence" value="ECO:0007669"/>
    <property type="project" value="InterPro"/>
</dbReference>
<dbReference type="GO" id="GO:0008387">
    <property type="term" value="F:steroid 7-alpha-hydroxylase activity"/>
    <property type="evidence" value="ECO:0000314"/>
    <property type="project" value="MGI"/>
</dbReference>
<dbReference type="GO" id="GO:0006699">
    <property type="term" value="P:bile acid biosynthetic process"/>
    <property type="evidence" value="ECO:0000314"/>
    <property type="project" value="UniProtKB"/>
</dbReference>
<dbReference type="GO" id="GO:0030573">
    <property type="term" value="P:bile acid catabolic process"/>
    <property type="evidence" value="ECO:0007669"/>
    <property type="project" value="UniProtKB-KW"/>
</dbReference>
<dbReference type="GO" id="GO:0006707">
    <property type="term" value="P:cholesterol catabolic process"/>
    <property type="evidence" value="ECO:0000314"/>
    <property type="project" value="MGI"/>
</dbReference>
<dbReference type="GO" id="GO:0007586">
    <property type="term" value="P:digestion"/>
    <property type="evidence" value="ECO:0000304"/>
    <property type="project" value="UniProtKB"/>
</dbReference>
<dbReference type="FunFam" id="1.10.630.10:FF:000060">
    <property type="entry name" value="Cytochrome P450 family 39 subfamily A member 1"/>
    <property type="match status" value="1"/>
</dbReference>
<dbReference type="Gene3D" id="1.10.630.10">
    <property type="entry name" value="Cytochrome P450"/>
    <property type="match status" value="1"/>
</dbReference>
<dbReference type="InterPro" id="IPR050529">
    <property type="entry name" value="CYP450_sterol_14alpha_dmase"/>
</dbReference>
<dbReference type="InterPro" id="IPR001128">
    <property type="entry name" value="Cyt_P450"/>
</dbReference>
<dbReference type="InterPro" id="IPR024204">
    <property type="entry name" value="Cyt_P450_CYP7A1-type"/>
</dbReference>
<dbReference type="InterPro" id="IPR002403">
    <property type="entry name" value="Cyt_P450_E_grp-IV"/>
</dbReference>
<dbReference type="InterPro" id="IPR036396">
    <property type="entry name" value="Cyt_P450_sf"/>
</dbReference>
<dbReference type="PANTHER" id="PTHR24304:SF2">
    <property type="entry name" value="24-HYDROXYCHOLESTEROL 7-ALPHA-HYDROXYLASE"/>
    <property type="match status" value="1"/>
</dbReference>
<dbReference type="PANTHER" id="PTHR24304">
    <property type="entry name" value="CYTOCHROME P450 FAMILY 7"/>
    <property type="match status" value="1"/>
</dbReference>
<dbReference type="Pfam" id="PF00067">
    <property type="entry name" value="p450"/>
    <property type="match status" value="1"/>
</dbReference>
<dbReference type="PIRSF" id="PIRSF000047">
    <property type="entry name" value="Cytochrome_CYPVIIA1"/>
    <property type="match status" value="1"/>
</dbReference>
<dbReference type="PRINTS" id="PR00465">
    <property type="entry name" value="EP450IV"/>
</dbReference>
<dbReference type="SUPFAM" id="SSF48264">
    <property type="entry name" value="Cytochrome P450"/>
    <property type="match status" value="1"/>
</dbReference>
<keyword id="KW-0088">Bile acid catabolism</keyword>
<keyword id="KW-0256">Endoplasmic reticulum</keyword>
<keyword id="KW-0349">Heme</keyword>
<keyword id="KW-0408">Iron</keyword>
<keyword id="KW-0442">Lipid degradation</keyword>
<keyword id="KW-0443">Lipid metabolism</keyword>
<keyword id="KW-0472">Membrane</keyword>
<keyword id="KW-0479">Metal-binding</keyword>
<keyword id="KW-0492">Microsome</keyword>
<keyword id="KW-0503">Monooxygenase</keyword>
<keyword id="KW-0560">Oxidoreductase</keyword>
<keyword id="KW-1185">Reference proteome</keyword>
<keyword id="KW-0753">Steroid metabolism</keyword>
<keyword id="KW-0812">Transmembrane</keyword>
<keyword id="KW-1133">Transmembrane helix</keyword>
<protein>
    <recommendedName>
        <fullName>24-hydroxycholesterol 7-alpha-hydroxylase</fullName>
        <ecNumber evidence="5">1.14.14.26</ecNumber>
    </recommendedName>
    <alternativeName>
        <fullName>Cytochrome P450 39A1</fullName>
        <shortName>mCYP39A1</shortName>
    </alternativeName>
    <alternativeName>
        <fullName>Oxysterol 7-alpha-hydroxylase</fullName>
    </alternativeName>
</protein>
<comment type="function">
    <text evidence="5">A cytochrome P450 monooxygenase involved in neural cholesterol clearance through bile acid synthesis. Catalyzes 7-alpha hydroxylation of (24S)-hydroxycholesterol, a neural oxysterol that is metabolized to bile acids in the liver (PubMed:10748047). Mechanistically, uses molecular oxygen inserting one oxygen atom into a substrate, and reducing the second into a water molecule, with two electrons provided by NADPH via cytochrome P450 reductase (CPR; NADPH-ferrihemoprotein reductase) (PubMed:10748047).</text>
</comment>
<comment type="catalytic activity">
    <reaction evidence="5">
        <text>(24S)-hydroxycholesterol + reduced [NADPH--hemoprotein reductase] + O2 = (24S)-7alpha-dihydroxycholesterol + oxidized [NADPH--hemoprotein reductase] + H2O + H(+)</text>
        <dbReference type="Rhea" id="RHEA:46124"/>
        <dbReference type="Rhea" id="RHEA-COMP:11964"/>
        <dbReference type="Rhea" id="RHEA-COMP:11965"/>
        <dbReference type="ChEBI" id="CHEBI:15377"/>
        <dbReference type="ChEBI" id="CHEBI:15378"/>
        <dbReference type="ChEBI" id="CHEBI:15379"/>
        <dbReference type="ChEBI" id="CHEBI:34310"/>
        <dbReference type="ChEBI" id="CHEBI:37640"/>
        <dbReference type="ChEBI" id="CHEBI:57618"/>
        <dbReference type="ChEBI" id="CHEBI:58210"/>
        <dbReference type="EC" id="1.14.14.26"/>
    </reaction>
</comment>
<comment type="cofactor">
    <cofactor evidence="1">
        <name>heme</name>
        <dbReference type="ChEBI" id="CHEBI:30413"/>
    </cofactor>
</comment>
<comment type="pathway">
    <text evidence="3">Steroid metabolism; cholesterol degradation.</text>
</comment>
<comment type="pathway">
    <text evidence="3">Lipid metabolism; bile acid biosynthesis.</text>
</comment>
<comment type="subcellular location">
    <subcellularLocation>
        <location evidence="2">Endoplasmic reticulum membrane</location>
        <topology evidence="4">Multi-pass membrane protein</topology>
    </subcellularLocation>
    <subcellularLocation>
        <location evidence="2">Microsome membrane</location>
        <topology evidence="4">Multi-pass membrane protein</topology>
    </subcellularLocation>
</comment>
<comment type="tissue specificity">
    <text>Liver specific. Hepatic expression is sexually dimorphic (female &gt; male).</text>
</comment>
<comment type="similarity">
    <text evidence="6">Belongs to the cytochrome P450 family.</text>
</comment>
<sequence length="470" mass="53575">MGIMELFSPIAIAVLGSCVLFLFSRLKNLLGPPCIQGWIPWIGAGLEFGKAPLEFIEKARIKYGPVFTIFAMGNRMTFVSEEEGINVLLKSEHVDFESAVQSPVYHTAWIPKNVFSALHERLYALMKGKMGTFNTHHFTGPLTEELHEQLEGLGTHGTMDLNDFVRYLLYPATLNTLFKKGLFLTDKRTIKEFYQQFKTYDEGFEYGSQLPEWLLRNWSKSKRWLLALFEKNIGNIKAHGSAGHSGTLLQAILEVVETETRQYSPNYGLVVLWAALANAPPIAFWTLGYILSHPDIHRTVLESISSVFGTAGKDKIKVSEDDLKKLLIIKWCILESVRLRAPGVITRKVVKPVKILNHTVPSGDLLMLSPFWLHRNPKYFPEPESFKPERWKEANLDKYIFLDYFMAFGGGKFQCPGRWFALLEIQLCIILVLYKYECSLLDPLPKQSSRHLVGVPQPAGKCRIEYKQRA</sequence>
<proteinExistence type="evidence at protein level"/>
<reference key="1">
    <citation type="journal article" date="2000" name="J. Biol. Chem.">
        <title>Expression cloning of an oxysterol 7alpha-hydroxylase selective for 24-hydroxycholesterol.</title>
        <authorList>
            <person name="Li-Hawkins J."/>
            <person name="Lund E.G."/>
            <person name="Bronson A.D."/>
            <person name="Russell D.W."/>
        </authorList>
    </citation>
    <scope>NUCLEOTIDE SEQUENCE [MRNA]</scope>
    <scope>FUNCTION</scope>
    <scope>CATALYTIC ACTIVITY</scope>
    <source>
        <tissue>Liver</tissue>
    </source>
</reference>
<reference key="2">
    <citation type="journal article" date="2010" name="Cell">
        <title>A tissue-specific atlas of mouse protein phosphorylation and expression.</title>
        <authorList>
            <person name="Huttlin E.L."/>
            <person name="Jedrychowski M.P."/>
            <person name="Elias J.E."/>
            <person name="Goswami T."/>
            <person name="Rad R."/>
            <person name="Beausoleil S.A."/>
            <person name="Villen J."/>
            <person name="Haas W."/>
            <person name="Sowa M.E."/>
            <person name="Gygi S.P."/>
        </authorList>
    </citation>
    <scope>IDENTIFICATION BY MASS SPECTROMETRY [LARGE SCALE ANALYSIS]</scope>
    <source>
        <tissue>Liver</tissue>
        <tissue>Lung</tissue>
        <tissue>Pancreas</tissue>
    </source>
</reference>
<name>CP39A_MOUSE</name>